<organism>
    <name type="scientific">Salmonella gallinarum (strain 287/91 / NCTC 13346)</name>
    <dbReference type="NCBI Taxonomy" id="550538"/>
    <lineage>
        <taxon>Bacteria</taxon>
        <taxon>Pseudomonadati</taxon>
        <taxon>Pseudomonadota</taxon>
        <taxon>Gammaproteobacteria</taxon>
        <taxon>Enterobacterales</taxon>
        <taxon>Enterobacteriaceae</taxon>
        <taxon>Salmonella</taxon>
    </lineage>
</organism>
<evidence type="ECO:0000255" key="1">
    <source>
        <dbReference type="HAMAP-Rule" id="MF_01279"/>
    </source>
</evidence>
<dbReference type="EC" id="3.4.13.9" evidence="1"/>
<dbReference type="EMBL" id="AM933173">
    <property type="protein sequence ID" value="CAR39258.1"/>
    <property type="molecule type" value="Genomic_DNA"/>
</dbReference>
<dbReference type="RefSeq" id="WP_000444529.1">
    <property type="nucleotide sequence ID" value="NC_011274.1"/>
</dbReference>
<dbReference type="SMR" id="B5RFL5"/>
<dbReference type="MEROPS" id="M24.003"/>
<dbReference type="KEGG" id="seg:SG3468"/>
<dbReference type="HOGENOM" id="CLU_050675_0_0_6"/>
<dbReference type="Proteomes" id="UP000008321">
    <property type="component" value="Chromosome"/>
</dbReference>
<dbReference type="GO" id="GO:0005829">
    <property type="term" value="C:cytosol"/>
    <property type="evidence" value="ECO:0007669"/>
    <property type="project" value="TreeGrafter"/>
</dbReference>
<dbReference type="GO" id="GO:0004177">
    <property type="term" value="F:aminopeptidase activity"/>
    <property type="evidence" value="ECO:0007669"/>
    <property type="project" value="TreeGrafter"/>
</dbReference>
<dbReference type="GO" id="GO:0046872">
    <property type="term" value="F:metal ion binding"/>
    <property type="evidence" value="ECO:0007669"/>
    <property type="project" value="UniProtKB-KW"/>
</dbReference>
<dbReference type="GO" id="GO:0008235">
    <property type="term" value="F:metalloexopeptidase activity"/>
    <property type="evidence" value="ECO:0007669"/>
    <property type="project" value="UniProtKB-UniRule"/>
</dbReference>
<dbReference type="GO" id="GO:0016795">
    <property type="term" value="F:phosphoric triester hydrolase activity"/>
    <property type="evidence" value="ECO:0007669"/>
    <property type="project" value="InterPro"/>
</dbReference>
<dbReference type="GO" id="GO:0102009">
    <property type="term" value="F:proline dipeptidase activity"/>
    <property type="evidence" value="ECO:0007669"/>
    <property type="project" value="UniProtKB-EC"/>
</dbReference>
<dbReference type="GO" id="GO:0006508">
    <property type="term" value="P:proteolysis"/>
    <property type="evidence" value="ECO:0007669"/>
    <property type="project" value="UniProtKB-KW"/>
</dbReference>
<dbReference type="CDD" id="cd01087">
    <property type="entry name" value="Prolidase"/>
    <property type="match status" value="1"/>
</dbReference>
<dbReference type="FunFam" id="3.40.350.10:FF:000002">
    <property type="entry name" value="Xaa-Pro dipeptidase"/>
    <property type="match status" value="1"/>
</dbReference>
<dbReference type="FunFam" id="3.90.230.10:FF:000006">
    <property type="entry name" value="Xaa-Pro dipeptidase"/>
    <property type="match status" value="1"/>
</dbReference>
<dbReference type="Gene3D" id="3.90.230.10">
    <property type="entry name" value="Creatinase/methionine aminopeptidase superfamily"/>
    <property type="match status" value="1"/>
</dbReference>
<dbReference type="Gene3D" id="3.40.350.10">
    <property type="entry name" value="Creatinase/prolidase N-terminal domain"/>
    <property type="match status" value="1"/>
</dbReference>
<dbReference type="HAMAP" id="MF_01279">
    <property type="entry name" value="X_Pro_dipeptid"/>
    <property type="match status" value="1"/>
</dbReference>
<dbReference type="InterPro" id="IPR029149">
    <property type="entry name" value="Creatin/AminoP/Spt16_N"/>
</dbReference>
<dbReference type="InterPro" id="IPR036005">
    <property type="entry name" value="Creatinase/aminopeptidase-like"/>
</dbReference>
<dbReference type="InterPro" id="IPR048819">
    <property type="entry name" value="PepQ_N"/>
</dbReference>
<dbReference type="InterPro" id="IPR000994">
    <property type="entry name" value="Pept_M24"/>
</dbReference>
<dbReference type="InterPro" id="IPR001131">
    <property type="entry name" value="Peptidase_M24B_aminopep-P_CS"/>
</dbReference>
<dbReference type="InterPro" id="IPR052433">
    <property type="entry name" value="X-Pro_dipept-like"/>
</dbReference>
<dbReference type="InterPro" id="IPR022846">
    <property type="entry name" value="X_Pro_dipept"/>
</dbReference>
<dbReference type="NCBIfam" id="NF010133">
    <property type="entry name" value="PRK13607.1"/>
    <property type="match status" value="1"/>
</dbReference>
<dbReference type="PANTHER" id="PTHR43226">
    <property type="entry name" value="XAA-PRO AMINOPEPTIDASE 3"/>
    <property type="match status" value="1"/>
</dbReference>
<dbReference type="PANTHER" id="PTHR43226:SF8">
    <property type="entry name" value="XAA-PRO DIPEPTIDASE"/>
    <property type="match status" value="1"/>
</dbReference>
<dbReference type="Pfam" id="PF21216">
    <property type="entry name" value="PepQ_N"/>
    <property type="match status" value="1"/>
</dbReference>
<dbReference type="Pfam" id="PF00557">
    <property type="entry name" value="Peptidase_M24"/>
    <property type="match status" value="1"/>
</dbReference>
<dbReference type="SUPFAM" id="SSF55920">
    <property type="entry name" value="Creatinase/aminopeptidase"/>
    <property type="match status" value="1"/>
</dbReference>
<dbReference type="PROSITE" id="PS00491">
    <property type="entry name" value="PROLINE_PEPTIDASE"/>
    <property type="match status" value="1"/>
</dbReference>
<keyword id="KW-0224">Dipeptidase</keyword>
<keyword id="KW-0378">Hydrolase</keyword>
<keyword id="KW-0464">Manganese</keyword>
<keyword id="KW-0479">Metal-binding</keyword>
<keyword id="KW-0482">Metalloprotease</keyword>
<keyword id="KW-0645">Protease</keyword>
<reference key="1">
    <citation type="journal article" date="2008" name="Genome Res.">
        <title>Comparative genome analysis of Salmonella enteritidis PT4 and Salmonella gallinarum 287/91 provides insights into evolutionary and host adaptation pathways.</title>
        <authorList>
            <person name="Thomson N.R."/>
            <person name="Clayton D.J."/>
            <person name="Windhorst D."/>
            <person name="Vernikos G."/>
            <person name="Davidson S."/>
            <person name="Churcher C."/>
            <person name="Quail M.A."/>
            <person name="Stevens M."/>
            <person name="Jones M.A."/>
            <person name="Watson M."/>
            <person name="Barron A."/>
            <person name="Layton A."/>
            <person name="Pickard D."/>
            <person name="Kingsley R.A."/>
            <person name="Bignell A."/>
            <person name="Clark L."/>
            <person name="Harris B."/>
            <person name="Ormond D."/>
            <person name="Abdellah Z."/>
            <person name="Brooks K."/>
            <person name="Cherevach I."/>
            <person name="Chillingworth T."/>
            <person name="Woodward J."/>
            <person name="Norberczak H."/>
            <person name="Lord A."/>
            <person name="Arrowsmith C."/>
            <person name="Jagels K."/>
            <person name="Moule S."/>
            <person name="Mungall K."/>
            <person name="Saunders M."/>
            <person name="Whitehead S."/>
            <person name="Chabalgoity J.A."/>
            <person name="Maskell D."/>
            <person name="Humphreys T."/>
            <person name="Roberts M."/>
            <person name="Barrow P.A."/>
            <person name="Dougan G."/>
            <person name="Parkhill J."/>
        </authorList>
    </citation>
    <scope>NUCLEOTIDE SEQUENCE [LARGE SCALE GENOMIC DNA]</scope>
    <source>
        <strain>287/91 / NCTC 13346</strain>
    </source>
</reference>
<proteinExistence type="inferred from homology"/>
<sequence>MESLAALYKNHIVTLQERTRDVLARFKLDALLIHSGELFNVFLDDHPYPFKVNPQFKAWVPVTQVPNCWLLVDGVNKPKLWFYLPVDYWHNVEPLPTSFWTEEVEVVALPKADGIGSQLPAARGNIGYIGPVPERALQLDIAASNINPKGVIDYLHYYRAYKTDYELACMREAQKMAVSGHRAAEEAFRSGMSEFDINLAYLTATGHRDTDVPYSNIVALNEHAAVLHYTKLDHQAPSEMRSFLLDAGAEYNGYAADLTRTWSAKSDNDYAHLVKDVNDEQLALIATMKAGVSYVDYHIQFHQRIAKLLRKHQIITDMSEEAMVENDLTGPFMPHGIGHPLGLQVHDVAGFMQDDSGTHLAAPSKYPYLRCTRVLQPRMVLTIEPGIYFIESLLAPWREGPFSKHFNWQKIEALKPFGGIRIEDNVVIHENGVENMTRDLKLA</sequence>
<protein>
    <recommendedName>
        <fullName evidence="1">Xaa-Pro dipeptidase</fullName>
        <shortName evidence="1">X-Pro dipeptidase</shortName>
        <ecNumber evidence="1">3.4.13.9</ecNumber>
    </recommendedName>
    <alternativeName>
        <fullName evidence="1">Imidodipeptidase</fullName>
    </alternativeName>
    <alternativeName>
        <fullName evidence="1">Proline dipeptidase</fullName>
        <shortName evidence="1">Prolidase</shortName>
    </alternativeName>
</protein>
<gene>
    <name evidence="1" type="primary">pepQ</name>
    <name type="ordered locus">SG3468</name>
</gene>
<feature type="chain" id="PRO_1000140326" description="Xaa-Pro dipeptidase">
    <location>
        <begin position="1"/>
        <end position="443"/>
    </location>
</feature>
<feature type="binding site" evidence="1">
    <location>
        <position position="246"/>
    </location>
    <ligand>
        <name>Mn(2+)</name>
        <dbReference type="ChEBI" id="CHEBI:29035"/>
        <label>2</label>
    </ligand>
</feature>
<feature type="binding site" evidence="1">
    <location>
        <position position="257"/>
    </location>
    <ligand>
        <name>Mn(2+)</name>
        <dbReference type="ChEBI" id="CHEBI:29035"/>
        <label>1</label>
    </ligand>
</feature>
<feature type="binding site" evidence="1">
    <location>
        <position position="257"/>
    </location>
    <ligand>
        <name>Mn(2+)</name>
        <dbReference type="ChEBI" id="CHEBI:29035"/>
        <label>2</label>
    </ligand>
</feature>
<feature type="binding site" evidence="1">
    <location>
        <position position="339"/>
    </location>
    <ligand>
        <name>Mn(2+)</name>
        <dbReference type="ChEBI" id="CHEBI:29035"/>
        <label>1</label>
    </ligand>
</feature>
<feature type="binding site" evidence="1">
    <location>
        <position position="384"/>
    </location>
    <ligand>
        <name>Mn(2+)</name>
        <dbReference type="ChEBI" id="CHEBI:29035"/>
        <label>1</label>
    </ligand>
</feature>
<feature type="binding site" evidence="1">
    <location>
        <position position="423"/>
    </location>
    <ligand>
        <name>Mn(2+)</name>
        <dbReference type="ChEBI" id="CHEBI:29035"/>
        <label>1</label>
    </ligand>
</feature>
<feature type="binding site" evidence="1">
    <location>
        <position position="423"/>
    </location>
    <ligand>
        <name>Mn(2+)</name>
        <dbReference type="ChEBI" id="CHEBI:29035"/>
        <label>2</label>
    </ligand>
</feature>
<name>PEPQ_SALG2</name>
<accession>B5RFL5</accession>
<comment type="function">
    <text evidence="1">Splits dipeptides with a prolyl residue in the C-terminal position.</text>
</comment>
<comment type="catalytic activity">
    <reaction evidence="1">
        <text>Xaa-L-Pro dipeptide + H2O = an L-alpha-amino acid + L-proline</text>
        <dbReference type="Rhea" id="RHEA:76407"/>
        <dbReference type="ChEBI" id="CHEBI:15377"/>
        <dbReference type="ChEBI" id="CHEBI:59869"/>
        <dbReference type="ChEBI" id="CHEBI:60039"/>
        <dbReference type="ChEBI" id="CHEBI:195196"/>
        <dbReference type="EC" id="3.4.13.9"/>
    </reaction>
</comment>
<comment type="cofactor">
    <cofactor evidence="1">
        <name>Mn(2+)</name>
        <dbReference type="ChEBI" id="CHEBI:29035"/>
    </cofactor>
    <text evidence="1">Binds 2 manganese ions per subunit.</text>
</comment>
<comment type="similarity">
    <text evidence="1">Belongs to the peptidase M24B family. Bacterial-type prolidase subfamily.</text>
</comment>